<comment type="function">
    <text evidence="1">Component of the eukaryotic translation initiation factor 3 (eIF-3) complex, which is involved in protein synthesis of a specialized repertoire of mRNAs and, together with other initiation factors, stimulates binding of mRNA and methionyl-tRNAi to the 40S ribosome. The eIF-3 complex specifically targets and initiates translation of a subset of mRNAs involved in cell proliferation.</text>
</comment>
<comment type="subunit">
    <text evidence="1">Component of the eukaryotic translation initiation factor 3 (eIF-3) complex, which is composed of 13 subunits: EIF3A, EIF3B, EIF3C, EIF3D, EIF3E, EIF3F, EIF3G, EIF3H, EIF3I, EIF3J, EIF3K, EIF3L and EIF3M.</text>
</comment>
<comment type="subcellular location">
    <subcellularLocation>
        <location evidence="1">Cytoplasm</location>
    </subcellularLocation>
    <subcellularLocation>
        <location evidence="1">Nucleus</location>
    </subcellularLocation>
</comment>
<comment type="similarity">
    <text evidence="1">Belongs to the eIF-3 subunit E family.</text>
</comment>
<feature type="chain" id="PRO_0000291874" description="Eukaryotic translation initiation factor 3 subunit E">
    <location>
        <begin position="1"/>
        <end position="445"/>
    </location>
</feature>
<feature type="domain" description="PCI" evidence="2">
    <location>
        <begin position="221"/>
        <end position="398"/>
    </location>
</feature>
<proteinExistence type="evidence at transcript level"/>
<evidence type="ECO:0000255" key="1">
    <source>
        <dbReference type="HAMAP-Rule" id="MF_03004"/>
    </source>
</evidence>
<evidence type="ECO:0000255" key="2">
    <source>
        <dbReference type="PROSITE-ProRule" id="PRU01185"/>
    </source>
</evidence>
<organism>
    <name type="scientific">Gallus gallus</name>
    <name type="common">Chicken</name>
    <dbReference type="NCBI Taxonomy" id="9031"/>
    <lineage>
        <taxon>Eukaryota</taxon>
        <taxon>Metazoa</taxon>
        <taxon>Chordata</taxon>
        <taxon>Craniata</taxon>
        <taxon>Vertebrata</taxon>
        <taxon>Euteleostomi</taxon>
        <taxon>Archelosauria</taxon>
        <taxon>Archosauria</taxon>
        <taxon>Dinosauria</taxon>
        <taxon>Saurischia</taxon>
        <taxon>Theropoda</taxon>
        <taxon>Coelurosauria</taxon>
        <taxon>Aves</taxon>
        <taxon>Neognathae</taxon>
        <taxon>Galloanserae</taxon>
        <taxon>Galliformes</taxon>
        <taxon>Phasianidae</taxon>
        <taxon>Phasianinae</taxon>
        <taxon>Gallus</taxon>
    </lineage>
</organism>
<name>EIF3E_CHICK</name>
<reference key="1">
    <citation type="journal article" date="2005" name="Genome Biol.">
        <title>Full-length cDNAs from chicken bursal lymphocytes to facilitate gene function analysis.</title>
        <authorList>
            <person name="Caldwell R.B."/>
            <person name="Kierzek A.M."/>
            <person name="Arakawa H."/>
            <person name="Bezzubov Y."/>
            <person name="Zaim J."/>
            <person name="Fiedler P."/>
            <person name="Kutter S."/>
            <person name="Blagodatski A."/>
            <person name="Kostovska D."/>
            <person name="Koter M."/>
            <person name="Plachy J."/>
            <person name="Carninci P."/>
            <person name="Hayashizaki Y."/>
            <person name="Buerstedde J.-M."/>
        </authorList>
    </citation>
    <scope>NUCLEOTIDE SEQUENCE [LARGE SCALE MRNA]</scope>
    <source>
        <strain>CB</strain>
        <tissue>Bursa of Fabricius</tissue>
    </source>
</reference>
<sequence>MAEYDLTTKIAHFLDRHLVFPLLEFLSVKEIYNEKELLQGKLDLLSDTNMVDFAMDVYKNLYSDEIPHALREKRTTVVAQLKQLQAETEPIVKMFEDPETTRQMQSTRDGRMLFDYLAEKHGFRQEYLDTLYRYAKFQYECGNYSGAAEYLYFFRVLVPATDRNALSSLWGKLASEVLMQNWDAAMEDLTRLKETIDNNSVSSPLQSLQQRTWLIHWSLFVFFNHPKGRDNIIDLFLYQPQYLNAIQTMCPHILRYLTTAVITNKDVRKRRQVLKDLVKVIQQESYTYRDPITEFVECLYVNFDFDGAQKKLRECETVLVNDFFLVACLEDFIENARLFIFETFCRIHQCISIGMLADKLNMTPEEAERWIVNLIRNARLDAKLDSELGHVVMGNNAVSPYQQVIEKTKSLSFRSQMLAMNIEKKLNQSGRSEAPNWATQDSGFY</sequence>
<gene>
    <name evidence="1" type="primary">EIF3E</name>
    <name evidence="1" type="synonym">EIF3S6</name>
    <name type="ORF">RCJMB04_6o19</name>
</gene>
<keyword id="KW-0963">Cytoplasm</keyword>
<keyword id="KW-0396">Initiation factor</keyword>
<keyword id="KW-0539">Nucleus</keyword>
<keyword id="KW-0648">Protein biosynthesis</keyword>
<keyword id="KW-1185">Reference proteome</keyword>
<dbReference type="EMBL" id="AJ719829">
    <property type="protein sequence ID" value="CAG31488.1"/>
    <property type="molecule type" value="mRNA"/>
</dbReference>
<dbReference type="RefSeq" id="NP_001006349.1">
    <property type="nucleotide sequence ID" value="NM_001006349.1"/>
</dbReference>
<dbReference type="SMR" id="Q5ZLA5"/>
<dbReference type="FunCoup" id="Q5ZLA5">
    <property type="interactions" value="2862"/>
</dbReference>
<dbReference type="STRING" id="9031.ENSGALP00000052766"/>
<dbReference type="PaxDb" id="9031-ENSGALP00000025883"/>
<dbReference type="GeneID" id="420272"/>
<dbReference type="KEGG" id="gga:420272"/>
<dbReference type="CTD" id="3646"/>
<dbReference type="VEuPathDB" id="HostDB:geneid_420272"/>
<dbReference type="eggNOG" id="KOG2758">
    <property type="taxonomic scope" value="Eukaryota"/>
</dbReference>
<dbReference type="InParanoid" id="Q5ZLA5"/>
<dbReference type="OrthoDB" id="417252at2759"/>
<dbReference type="PhylomeDB" id="Q5ZLA5"/>
<dbReference type="PRO" id="PR:Q5ZLA5"/>
<dbReference type="Proteomes" id="UP000000539">
    <property type="component" value="Unassembled WGS sequence"/>
</dbReference>
<dbReference type="GO" id="GO:0016282">
    <property type="term" value="C:eukaryotic 43S preinitiation complex"/>
    <property type="evidence" value="ECO:0007669"/>
    <property type="project" value="UniProtKB-UniRule"/>
</dbReference>
<dbReference type="GO" id="GO:0033290">
    <property type="term" value="C:eukaryotic 48S preinitiation complex"/>
    <property type="evidence" value="ECO:0007669"/>
    <property type="project" value="UniProtKB-UniRule"/>
</dbReference>
<dbReference type="GO" id="GO:0005852">
    <property type="term" value="C:eukaryotic translation initiation factor 3 complex"/>
    <property type="evidence" value="ECO:0000250"/>
    <property type="project" value="UniProtKB"/>
</dbReference>
<dbReference type="GO" id="GO:0071540">
    <property type="term" value="C:eukaryotic translation initiation factor 3 complex, eIF3e"/>
    <property type="evidence" value="ECO:0007669"/>
    <property type="project" value="UniProtKB-UniRule"/>
</dbReference>
<dbReference type="GO" id="GO:0005634">
    <property type="term" value="C:nucleus"/>
    <property type="evidence" value="ECO:0000318"/>
    <property type="project" value="GO_Central"/>
</dbReference>
<dbReference type="GO" id="GO:0003743">
    <property type="term" value="F:translation initiation factor activity"/>
    <property type="evidence" value="ECO:0007669"/>
    <property type="project" value="UniProtKB-UniRule"/>
</dbReference>
<dbReference type="GO" id="GO:0001732">
    <property type="term" value="P:formation of cytoplasmic translation initiation complex"/>
    <property type="evidence" value="ECO:0007669"/>
    <property type="project" value="UniProtKB-UniRule"/>
</dbReference>
<dbReference type="GO" id="GO:0006413">
    <property type="term" value="P:translational initiation"/>
    <property type="evidence" value="ECO:0000250"/>
    <property type="project" value="UniProtKB"/>
</dbReference>
<dbReference type="CDD" id="cd21378">
    <property type="entry name" value="eIF3E"/>
    <property type="match status" value="1"/>
</dbReference>
<dbReference type="HAMAP" id="MF_03004">
    <property type="entry name" value="eIF3e"/>
    <property type="match status" value="1"/>
</dbReference>
<dbReference type="InterPro" id="IPR016650">
    <property type="entry name" value="eIF3e"/>
</dbReference>
<dbReference type="InterPro" id="IPR019010">
    <property type="entry name" value="eIF3e_N"/>
</dbReference>
<dbReference type="InterPro" id="IPR000717">
    <property type="entry name" value="PCI_dom"/>
</dbReference>
<dbReference type="InterPro" id="IPR036390">
    <property type="entry name" value="WH_DNA-bd_sf"/>
</dbReference>
<dbReference type="PANTHER" id="PTHR10317">
    <property type="entry name" value="EUKARYOTIC TRANSLATION INITIATION FACTOR 3 SUBUNIT E"/>
    <property type="match status" value="1"/>
</dbReference>
<dbReference type="Pfam" id="PF09440">
    <property type="entry name" value="eIF3_N"/>
    <property type="match status" value="1"/>
</dbReference>
<dbReference type="Pfam" id="PF21357">
    <property type="entry name" value="EIF3E_C"/>
    <property type="match status" value="1"/>
</dbReference>
<dbReference type="Pfam" id="PF01399">
    <property type="entry name" value="PCI"/>
    <property type="match status" value="1"/>
</dbReference>
<dbReference type="PIRSF" id="PIRSF016255">
    <property type="entry name" value="eIF3e_su6"/>
    <property type="match status" value="1"/>
</dbReference>
<dbReference type="SMART" id="SM01186">
    <property type="entry name" value="eIF3_N"/>
    <property type="match status" value="1"/>
</dbReference>
<dbReference type="SMART" id="SM00088">
    <property type="entry name" value="PINT"/>
    <property type="match status" value="1"/>
</dbReference>
<dbReference type="SUPFAM" id="SSF46785">
    <property type="entry name" value="Winged helix' DNA-binding domain"/>
    <property type="match status" value="1"/>
</dbReference>
<dbReference type="PROSITE" id="PS50250">
    <property type="entry name" value="PCI"/>
    <property type="match status" value="1"/>
</dbReference>
<accession>Q5ZLA5</accession>
<protein>
    <recommendedName>
        <fullName evidence="1">Eukaryotic translation initiation factor 3 subunit E</fullName>
        <shortName evidence="1">eIF3e</shortName>
    </recommendedName>
    <alternativeName>
        <fullName evidence="1">Eukaryotic translation initiation factor 3 subunit 6</fullName>
    </alternativeName>
</protein>